<feature type="chain" id="PRO_1000024477" description="Putative regulatory protein CBO2514/CLC_2370">
    <location>
        <begin position="1"/>
        <end position="91"/>
    </location>
</feature>
<dbReference type="EMBL" id="CP000727">
    <property type="protein sequence ID" value="ABS38839.1"/>
    <property type="molecule type" value="Genomic_DNA"/>
</dbReference>
<dbReference type="EMBL" id="AM412317">
    <property type="protein sequence ID" value="CAL84066.1"/>
    <property type="molecule type" value="Genomic_DNA"/>
</dbReference>
<dbReference type="RefSeq" id="YP_001255010.1">
    <property type="nucleotide sequence ID" value="NC_009495.1"/>
</dbReference>
<dbReference type="RefSeq" id="YP_001388213.1">
    <property type="nucleotide sequence ID" value="NC_009698.1"/>
</dbReference>
<dbReference type="SMR" id="A5I4U3"/>
<dbReference type="GeneID" id="5186769"/>
<dbReference type="KEGG" id="cbh:CLC_2370"/>
<dbReference type="KEGG" id="cbo:CBO2514"/>
<dbReference type="PATRIC" id="fig|413999.7.peg.2493"/>
<dbReference type="HOGENOM" id="CLU_165326_0_0_9"/>
<dbReference type="PRO" id="PR:A5I4U3"/>
<dbReference type="Proteomes" id="UP000001986">
    <property type="component" value="Chromosome"/>
</dbReference>
<dbReference type="HAMAP" id="MF_01503">
    <property type="entry name" value="RemA"/>
    <property type="match status" value="1"/>
</dbReference>
<dbReference type="InterPro" id="IPR007169">
    <property type="entry name" value="RemA-like"/>
</dbReference>
<dbReference type="NCBIfam" id="NF046064">
    <property type="entry name" value="MtxBflmRegRemA"/>
    <property type="match status" value="1"/>
</dbReference>
<dbReference type="NCBIfam" id="NF003315">
    <property type="entry name" value="PRK04323.1"/>
    <property type="match status" value="1"/>
</dbReference>
<dbReference type="PANTHER" id="PTHR38449:SF1">
    <property type="entry name" value="REGULATORY PROTEIN SSL2874-RELATED"/>
    <property type="match status" value="1"/>
</dbReference>
<dbReference type="PANTHER" id="PTHR38449">
    <property type="entry name" value="REGULATORY PROTEIN TM_1690-RELATED"/>
    <property type="match status" value="1"/>
</dbReference>
<dbReference type="Pfam" id="PF04025">
    <property type="entry name" value="RemA-like"/>
    <property type="match status" value="1"/>
</dbReference>
<comment type="similarity">
    <text evidence="1">Belongs to the RemA family.</text>
</comment>
<gene>
    <name type="ordered locus">CBO2514</name>
    <name type="ordered locus">CLC_2370</name>
</gene>
<organism>
    <name type="scientific">Clostridium botulinum (strain Hall / ATCC 3502 / NCTC 13319 / Type A)</name>
    <dbReference type="NCBI Taxonomy" id="441771"/>
    <lineage>
        <taxon>Bacteria</taxon>
        <taxon>Bacillati</taxon>
        <taxon>Bacillota</taxon>
        <taxon>Clostridia</taxon>
        <taxon>Eubacteriales</taxon>
        <taxon>Clostridiaceae</taxon>
        <taxon>Clostridium</taxon>
    </lineage>
</organism>
<sequence>MAIKLINIGFGNIVSANRLVAIVSPESAPIKRIIQEARDRGMLIDATYGRRTRAVIITDSDHVILSAVQPETVAHRLASKAEEEDINEGEE</sequence>
<keyword id="KW-1185">Reference proteome</keyword>
<evidence type="ECO:0000255" key="1">
    <source>
        <dbReference type="HAMAP-Rule" id="MF_01503"/>
    </source>
</evidence>
<protein>
    <recommendedName>
        <fullName evidence="1">Putative regulatory protein CBO2514/CLC_2370</fullName>
    </recommendedName>
</protein>
<name>Y2514_CLOBH</name>
<accession>A5I4U3</accession>
<accession>A7G5Z8</accession>
<reference key="1">
    <citation type="journal article" date="2007" name="Genome Res.">
        <title>Genome sequence of a proteolytic (Group I) Clostridium botulinum strain Hall A and comparative analysis of the clostridial genomes.</title>
        <authorList>
            <person name="Sebaihia M."/>
            <person name="Peck M.W."/>
            <person name="Minton N.P."/>
            <person name="Thomson N.R."/>
            <person name="Holden M.T.G."/>
            <person name="Mitchell W.J."/>
            <person name="Carter A.T."/>
            <person name="Bentley S.D."/>
            <person name="Mason D.R."/>
            <person name="Crossman L."/>
            <person name="Paul C.J."/>
            <person name="Ivens A."/>
            <person name="Wells-Bennik M.H.J."/>
            <person name="Davis I.J."/>
            <person name="Cerdeno-Tarraga A.M."/>
            <person name="Churcher C."/>
            <person name="Quail M.A."/>
            <person name="Chillingworth T."/>
            <person name="Feltwell T."/>
            <person name="Fraser A."/>
            <person name="Goodhead I."/>
            <person name="Hance Z."/>
            <person name="Jagels K."/>
            <person name="Larke N."/>
            <person name="Maddison M."/>
            <person name="Moule S."/>
            <person name="Mungall K."/>
            <person name="Norbertczak H."/>
            <person name="Rabbinowitsch E."/>
            <person name="Sanders M."/>
            <person name="Simmonds M."/>
            <person name="White B."/>
            <person name="Whithead S."/>
            <person name="Parkhill J."/>
        </authorList>
    </citation>
    <scope>NUCLEOTIDE SEQUENCE [LARGE SCALE GENOMIC DNA]</scope>
    <source>
        <strain>Hall / ATCC 3502 / NCTC 13319 / Type A</strain>
    </source>
</reference>
<reference key="2">
    <citation type="journal article" date="2007" name="PLoS ONE">
        <title>Analysis of the neurotoxin complex genes in Clostridium botulinum A1-A4 and B1 strains: BoNT/A3, /Ba4 and /B1 clusters are located within plasmids.</title>
        <authorList>
            <person name="Smith T.J."/>
            <person name="Hill K.K."/>
            <person name="Foley B.T."/>
            <person name="Detter J.C."/>
            <person name="Munk A.C."/>
            <person name="Bruce D.C."/>
            <person name="Doggett N.A."/>
            <person name="Smith L.A."/>
            <person name="Marks J.D."/>
            <person name="Xie G."/>
            <person name="Brettin T.S."/>
        </authorList>
    </citation>
    <scope>NUCLEOTIDE SEQUENCE [LARGE SCALE GENOMIC DNA]</scope>
    <source>
        <strain>Hall / ATCC 3502 / NCTC 13319 / Type A</strain>
    </source>
</reference>
<proteinExistence type="inferred from homology"/>